<feature type="chain" id="PRO_0000324188" description="Nuclear pore complex protein Nup85">
    <location>
        <begin position="1"/>
        <end position="656"/>
    </location>
</feature>
<feature type="modified residue" description="N-acetylmethionine" evidence="1">
    <location>
        <position position="1"/>
    </location>
</feature>
<feature type="modified residue" description="N6-acetyllysine" evidence="4">
    <location>
        <position position="92"/>
    </location>
</feature>
<feature type="sequence conflict" description="In Ref. 2; BAB30848." evidence="3" ref="2">
    <original>R</original>
    <variation>G</variation>
    <location>
        <position position="649"/>
    </location>
</feature>
<name>NUP85_MOUSE</name>
<accession>Q8R480</accession>
<accession>A2A9W9</accession>
<accession>A2A9X0</accession>
<accession>Q9CYI9</accession>
<comment type="function">
    <text evidence="1">Essential component of the nuclear pore complex (NPC) that seems to be required for NPC assembly and maintenance. As part of the NPC Nup107-160 subcomplex plays a role in RNA export and in tethering NUP96/Nup98 and NUP153 to the nucleus. The Nup107-160 complex seems to be required for spindle assembly during mitosis. NUP85 is required for membrane clustering of CCL2-activated CCR2. Seems to be involved in CCR2-mediated chemotaxis of monocytes and may link activated CCR2 to the phosphatidyl-inositol 3-kinase-Rac-lammellipodium protrusion cascade. Involved in nephrogenesis.</text>
</comment>
<comment type="subunit">
    <text evidence="1 2">Component of the nuclear pore complex (NPC). Component of the NPC Nup107-160 subcomplex, consisting of at least NUP107, NUP98/Nup96, NUP160, NUP133, NUP85, NUP37, NUP43 and SEC13. Interacts with NUP160, NUP133 and SEC13 (PubMed:12718872). Interacts with NUP37, NUP107 and NUP43. Interacts with CCR2.</text>
</comment>
<comment type="subcellular location">
    <subcellularLocation>
        <location evidence="1">Nucleus</location>
        <location evidence="1">Nuclear pore complex</location>
    </subcellularLocation>
    <subcellularLocation>
        <location evidence="1">Chromosome</location>
        <location evidence="1">Centromere</location>
        <location evidence="1">Kinetochore</location>
    </subcellularLocation>
    <subcellularLocation>
        <location evidence="1">Cytoplasm</location>
        <location evidence="1">Cytoskeleton</location>
        <location evidence="1">Spindle</location>
    </subcellularLocation>
    <subcellularLocation>
        <location evidence="1">Cytoplasm</location>
    </subcellularLocation>
    <subcellularLocation>
        <location evidence="1">Nucleus membrane</location>
    </subcellularLocation>
    <text evidence="1">During mitosis, localizes to the kinetochores and spindle poles. Upon CCl2 stimulation translocates from the cytoplasm to the membrane and colocalizes with CCR2 at the front of migrating cells.</text>
</comment>
<comment type="similarity">
    <text evidence="3">Belongs to the nucleoporin Nup85 family.</text>
</comment>
<comment type="sequence caution" evidence="3">
    <conflict type="erroneous gene model prediction">
        <sequence resource="EMBL-CDS" id="CAM23011"/>
    </conflict>
</comment>
<comment type="sequence caution" evidence="3">
    <conflict type="erroneous gene model prediction">
        <sequence resource="EMBL-CDS" id="CAM23012"/>
    </conflict>
</comment>
<organism>
    <name type="scientific">Mus musculus</name>
    <name type="common">Mouse</name>
    <dbReference type="NCBI Taxonomy" id="10090"/>
    <lineage>
        <taxon>Eukaryota</taxon>
        <taxon>Metazoa</taxon>
        <taxon>Chordata</taxon>
        <taxon>Craniata</taxon>
        <taxon>Vertebrata</taxon>
        <taxon>Euteleostomi</taxon>
        <taxon>Mammalia</taxon>
        <taxon>Eutheria</taxon>
        <taxon>Euarchontoglires</taxon>
        <taxon>Glires</taxon>
        <taxon>Rodentia</taxon>
        <taxon>Myomorpha</taxon>
        <taxon>Muroidea</taxon>
        <taxon>Muridae</taxon>
        <taxon>Murinae</taxon>
        <taxon>Mus</taxon>
        <taxon>Mus</taxon>
    </lineage>
</organism>
<proteinExistence type="evidence at protein level"/>
<dbReference type="EMBL" id="AF498263">
    <property type="protein sequence ID" value="AAM18529.1"/>
    <property type="molecule type" value="mRNA"/>
</dbReference>
<dbReference type="EMBL" id="AK017632">
    <property type="protein sequence ID" value="BAB30848.1"/>
    <property type="molecule type" value="mRNA"/>
</dbReference>
<dbReference type="EMBL" id="AL645470">
    <property type="protein sequence ID" value="CAM23011.1"/>
    <property type="status" value="ALT_SEQ"/>
    <property type="molecule type" value="Genomic_DNA"/>
</dbReference>
<dbReference type="EMBL" id="AL645470">
    <property type="protein sequence ID" value="CAM23012.1"/>
    <property type="status" value="ALT_SEQ"/>
    <property type="molecule type" value="Genomic_DNA"/>
</dbReference>
<dbReference type="EMBL" id="AL645470">
    <property type="protein sequence ID" value="CAM23013.1"/>
    <property type="molecule type" value="Genomic_DNA"/>
</dbReference>
<dbReference type="EMBL" id="BC079856">
    <property type="protein sequence ID" value="AAH79856.1"/>
    <property type="molecule type" value="mRNA"/>
</dbReference>
<dbReference type="CCDS" id="CCDS25640.1"/>
<dbReference type="RefSeq" id="NP_001002929.3">
    <property type="nucleotide sequence ID" value="NM_001002929.4"/>
</dbReference>
<dbReference type="SMR" id="Q8R480"/>
<dbReference type="BioGRID" id="243059">
    <property type="interactions" value="20"/>
</dbReference>
<dbReference type="ComplexPortal" id="CPX-4474">
    <property type="entry name" value="Nuclear pore complex"/>
</dbReference>
<dbReference type="FunCoup" id="Q8R480">
    <property type="interactions" value="4740"/>
</dbReference>
<dbReference type="IntAct" id="Q8R480">
    <property type="interactions" value="2"/>
</dbReference>
<dbReference type="MINT" id="Q8R480"/>
<dbReference type="STRING" id="10090.ENSMUSP00000021085"/>
<dbReference type="GlyGen" id="Q8R480">
    <property type="glycosylation" value="1 site, 1 O-linked glycan (1 site)"/>
</dbReference>
<dbReference type="iPTMnet" id="Q8R480"/>
<dbReference type="PhosphoSitePlus" id="Q8R480"/>
<dbReference type="SwissPalm" id="Q8R480"/>
<dbReference type="jPOST" id="Q8R480"/>
<dbReference type="PaxDb" id="10090-ENSMUSP00000021085"/>
<dbReference type="PeptideAtlas" id="Q8R480"/>
<dbReference type="ProteomicsDB" id="293782"/>
<dbReference type="Pumba" id="Q8R480"/>
<dbReference type="Antibodypedia" id="32118">
    <property type="antibodies" value="228 antibodies from 30 providers"/>
</dbReference>
<dbReference type="DNASU" id="445007"/>
<dbReference type="Ensembl" id="ENSMUST00000021085.11">
    <property type="protein sequence ID" value="ENSMUSP00000021085.5"/>
    <property type="gene ID" value="ENSMUSG00000020739.12"/>
</dbReference>
<dbReference type="GeneID" id="445007"/>
<dbReference type="KEGG" id="mmu:445007"/>
<dbReference type="UCSC" id="uc007mhx.2">
    <property type="organism name" value="mouse"/>
</dbReference>
<dbReference type="AGR" id="MGI:3046173"/>
<dbReference type="CTD" id="79902"/>
<dbReference type="MGI" id="MGI:3046173">
    <property type="gene designation" value="Nup85"/>
</dbReference>
<dbReference type="VEuPathDB" id="HostDB:ENSMUSG00000020739"/>
<dbReference type="eggNOG" id="KOG2271">
    <property type="taxonomic scope" value="Eukaryota"/>
</dbReference>
<dbReference type="GeneTree" id="ENSGT00390000000204"/>
<dbReference type="HOGENOM" id="CLU_027342_0_0_1"/>
<dbReference type="InParanoid" id="Q8R480"/>
<dbReference type="OMA" id="ELMEWLN"/>
<dbReference type="OrthoDB" id="17644at2759"/>
<dbReference type="PhylomeDB" id="Q8R480"/>
<dbReference type="TreeFam" id="TF323240"/>
<dbReference type="Reactome" id="R-MMU-141444">
    <property type="pathway name" value="Amplification of signal from unattached kinetochores via a MAD2 inhibitory signal"/>
</dbReference>
<dbReference type="Reactome" id="R-MMU-159227">
    <property type="pathway name" value="Transport of the SLBP independent Mature mRNA"/>
</dbReference>
<dbReference type="Reactome" id="R-MMU-159230">
    <property type="pathway name" value="Transport of the SLBP Dependant Mature mRNA"/>
</dbReference>
<dbReference type="Reactome" id="R-MMU-159231">
    <property type="pathway name" value="Transport of Mature mRNA Derived from an Intronless Transcript"/>
</dbReference>
<dbReference type="Reactome" id="R-MMU-159236">
    <property type="pathway name" value="Transport of Mature mRNA derived from an Intron-Containing Transcript"/>
</dbReference>
<dbReference type="Reactome" id="R-MMU-170822">
    <property type="pathway name" value="Regulation of Glucokinase by Glucokinase Regulatory Protein"/>
</dbReference>
<dbReference type="Reactome" id="R-MMU-191859">
    <property type="pathway name" value="snRNP Assembly"/>
</dbReference>
<dbReference type="Reactome" id="R-MMU-2467813">
    <property type="pathway name" value="Separation of Sister Chromatids"/>
</dbReference>
<dbReference type="Reactome" id="R-MMU-2500257">
    <property type="pathway name" value="Resolution of Sister Chromatid Cohesion"/>
</dbReference>
<dbReference type="Reactome" id="R-MMU-3108214">
    <property type="pathway name" value="SUMOylation of DNA damage response and repair proteins"/>
</dbReference>
<dbReference type="Reactome" id="R-MMU-3232142">
    <property type="pathway name" value="SUMOylation of ubiquitinylation proteins"/>
</dbReference>
<dbReference type="Reactome" id="R-MMU-3301854">
    <property type="pathway name" value="Nuclear Pore Complex (NPC) Disassembly"/>
</dbReference>
<dbReference type="Reactome" id="R-MMU-3371453">
    <property type="pathway name" value="Regulation of HSF1-mediated heat shock response"/>
</dbReference>
<dbReference type="Reactome" id="R-MMU-4085377">
    <property type="pathway name" value="SUMOylation of SUMOylation proteins"/>
</dbReference>
<dbReference type="Reactome" id="R-MMU-4551638">
    <property type="pathway name" value="SUMOylation of chromatin organization proteins"/>
</dbReference>
<dbReference type="Reactome" id="R-MMU-4570464">
    <property type="pathway name" value="SUMOylation of RNA binding proteins"/>
</dbReference>
<dbReference type="Reactome" id="R-MMU-4615885">
    <property type="pathway name" value="SUMOylation of DNA replication proteins"/>
</dbReference>
<dbReference type="Reactome" id="R-MMU-5578749">
    <property type="pathway name" value="Transcriptional regulation by small RNAs"/>
</dbReference>
<dbReference type="Reactome" id="R-MMU-5663220">
    <property type="pathway name" value="RHO GTPases Activate Formins"/>
</dbReference>
<dbReference type="Reactome" id="R-MMU-68877">
    <property type="pathway name" value="Mitotic Prometaphase"/>
</dbReference>
<dbReference type="Reactome" id="R-MMU-9615933">
    <property type="pathway name" value="Postmitotic nuclear pore complex (NPC) reformation"/>
</dbReference>
<dbReference type="Reactome" id="R-MMU-9648025">
    <property type="pathway name" value="EML4 and NUDC in mitotic spindle formation"/>
</dbReference>
<dbReference type="BioGRID-ORCS" id="445007">
    <property type="hits" value="27 hits in 80 CRISPR screens"/>
</dbReference>
<dbReference type="ChiTaRS" id="Nup85">
    <property type="organism name" value="mouse"/>
</dbReference>
<dbReference type="PRO" id="PR:Q8R480"/>
<dbReference type="Proteomes" id="UP000000589">
    <property type="component" value="Chromosome 11"/>
</dbReference>
<dbReference type="RNAct" id="Q8R480">
    <property type="molecule type" value="protein"/>
</dbReference>
<dbReference type="Bgee" id="ENSMUSG00000020739">
    <property type="expression patterns" value="Expressed in optic fissure and 266 other cell types or tissues"/>
</dbReference>
<dbReference type="ExpressionAtlas" id="Q8R480">
    <property type="expression patterns" value="baseline and differential"/>
</dbReference>
<dbReference type="GO" id="GO:0015629">
    <property type="term" value="C:actin cytoskeleton"/>
    <property type="evidence" value="ECO:0007669"/>
    <property type="project" value="Ensembl"/>
</dbReference>
<dbReference type="GO" id="GO:0036064">
    <property type="term" value="C:ciliary basal body"/>
    <property type="evidence" value="ECO:0007669"/>
    <property type="project" value="Ensembl"/>
</dbReference>
<dbReference type="GO" id="GO:0005737">
    <property type="term" value="C:cytoplasm"/>
    <property type="evidence" value="ECO:0000247"/>
    <property type="project" value="MGI"/>
</dbReference>
<dbReference type="GO" id="GO:0005829">
    <property type="term" value="C:cytosol"/>
    <property type="evidence" value="ECO:0007669"/>
    <property type="project" value="Ensembl"/>
</dbReference>
<dbReference type="GO" id="GO:0000776">
    <property type="term" value="C:kinetochore"/>
    <property type="evidence" value="ECO:0007669"/>
    <property type="project" value="UniProtKB-KW"/>
</dbReference>
<dbReference type="GO" id="GO:0005635">
    <property type="term" value="C:nuclear envelope"/>
    <property type="evidence" value="ECO:0000266"/>
    <property type="project" value="ComplexPortal"/>
</dbReference>
<dbReference type="GO" id="GO:0031965">
    <property type="term" value="C:nuclear membrane"/>
    <property type="evidence" value="ECO:0007669"/>
    <property type="project" value="UniProtKB-SubCell"/>
</dbReference>
<dbReference type="GO" id="GO:0005643">
    <property type="term" value="C:nuclear pore"/>
    <property type="evidence" value="ECO:0000303"/>
    <property type="project" value="ComplexPortal"/>
</dbReference>
<dbReference type="GO" id="GO:0031080">
    <property type="term" value="C:nuclear pore outer ring"/>
    <property type="evidence" value="ECO:0000250"/>
    <property type="project" value="UniProtKB"/>
</dbReference>
<dbReference type="GO" id="GO:0005654">
    <property type="term" value="C:nucleoplasm"/>
    <property type="evidence" value="ECO:0007669"/>
    <property type="project" value="Ensembl"/>
</dbReference>
<dbReference type="GO" id="GO:0005886">
    <property type="term" value="C:plasma membrane"/>
    <property type="evidence" value="ECO:0000247"/>
    <property type="project" value="MGI"/>
</dbReference>
<dbReference type="GO" id="GO:0005819">
    <property type="term" value="C:spindle"/>
    <property type="evidence" value="ECO:0007669"/>
    <property type="project" value="UniProtKB-SubCell"/>
</dbReference>
<dbReference type="GO" id="GO:0031727">
    <property type="term" value="F:CCR2 chemokine receptor binding"/>
    <property type="evidence" value="ECO:0000247"/>
    <property type="project" value="MGI"/>
</dbReference>
<dbReference type="GO" id="GO:0006935">
    <property type="term" value="P:chemotaxis"/>
    <property type="evidence" value="ECO:0000314"/>
    <property type="project" value="MGI"/>
</dbReference>
<dbReference type="GO" id="GO:0019221">
    <property type="term" value="P:cytokine-mediated signaling pathway"/>
    <property type="evidence" value="ECO:0000247"/>
    <property type="project" value="MGI"/>
</dbReference>
<dbReference type="GO" id="GO:0030032">
    <property type="term" value="P:lamellipodium assembly"/>
    <property type="evidence" value="ECO:0000314"/>
    <property type="project" value="MGI"/>
</dbReference>
<dbReference type="GO" id="GO:0048246">
    <property type="term" value="P:macrophage chemotaxis"/>
    <property type="evidence" value="ECO:0000314"/>
    <property type="project" value="MGI"/>
</dbReference>
<dbReference type="GO" id="GO:0051028">
    <property type="term" value="P:mRNA transport"/>
    <property type="evidence" value="ECO:0007669"/>
    <property type="project" value="UniProtKB-KW"/>
</dbReference>
<dbReference type="GO" id="GO:0072006">
    <property type="term" value="P:nephron development"/>
    <property type="evidence" value="ECO:0000250"/>
    <property type="project" value="UniProtKB"/>
</dbReference>
<dbReference type="GO" id="GO:0006913">
    <property type="term" value="P:nucleocytoplasmic transport"/>
    <property type="evidence" value="ECO:0000303"/>
    <property type="project" value="ComplexPortal"/>
</dbReference>
<dbReference type="GO" id="GO:0015031">
    <property type="term" value="P:protein transport"/>
    <property type="evidence" value="ECO:0007669"/>
    <property type="project" value="UniProtKB-KW"/>
</dbReference>
<dbReference type="InterPro" id="IPR011502">
    <property type="entry name" value="Nucleoporin_Nup85"/>
</dbReference>
<dbReference type="PANTHER" id="PTHR13373">
    <property type="entry name" value="FROUNT PROTEIN-RELATED"/>
    <property type="match status" value="1"/>
</dbReference>
<dbReference type="PANTHER" id="PTHR13373:SF21">
    <property type="entry name" value="NUCLEAR PORE COMPLEX PROTEIN NUP85"/>
    <property type="match status" value="1"/>
</dbReference>
<dbReference type="Pfam" id="PF07575">
    <property type="entry name" value="Nucleopor_Nup85"/>
    <property type="match status" value="1"/>
</dbReference>
<protein>
    <recommendedName>
        <fullName>Nuclear pore complex protein Nup85</fullName>
    </recommendedName>
    <alternativeName>
        <fullName>85 kDa nucleoporin</fullName>
    </alternativeName>
    <alternativeName>
        <fullName>FROUNT</fullName>
    </alternativeName>
    <alternativeName>
        <fullName>Nucleoporin Nup85</fullName>
    </alternativeName>
    <alternativeName>
        <fullName>Pericentrin-1</fullName>
    </alternativeName>
</protein>
<reference key="1">
    <citation type="journal article" date="2005" name="Nat. Immunol.">
        <title>Pivotal function for cytoplasmic protein FROUNT in CCR2-mediated monocyte chemotaxis.</title>
        <authorList>
            <person name="Terashima Y."/>
            <person name="Onai N."/>
            <person name="Murai M."/>
            <person name="Enomoto M."/>
            <person name="Poonpiriya V."/>
            <person name="Hamada T."/>
            <person name="Motomura K."/>
            <person name="Suwa M."/>
            <person name="Ezaki T."/>
            <person name="Haga T."/>
            <person name="Kanegasaki S."/>
            <person name="Matsushima K."/>
        </authorList>
    </citation>
    <scope>NUCLEOTIDE SEQUENCE [MRNA]</scope>
    <source>
        <strain>C57BL/6J</strain>
    </source>
</reference>
<reference key="2">
    <citation type="journal article" date="2005" name="Science">
        <title>The transcriptional landscape of the mammalian genome.</title>
        <authorList>
            <person name="Carninci P."/>
            <person name="Kasukawa T."/>
            <person name="Katayama S."/>
            <person name="Gough J."/>
            <person name="Frith M.C."/>
            <person name="Maeda N."/>
            <person name="Oyama R."/>
            <person name="Ravasi T."/>
            <person name="Lenhard B."/>
            <person name="Wells C."/>
            <person name="Kodzius R."/>
            <person name="Shimokawa K."/>
            <person name="Bajic V.B."/>
            <person name="Brenner S.E."/>
            <person name="Batalov S."/>
            <person name="Forrest A.R."/>
            <person name="Zavolan M."/>
            <person name="Davis M.J."/>
            <person name="Wilming L.G."/>
            <person name="Aidinis V."/>
            <person name="Allen J.E."/>
            <person name="Ambesi-Impiombato A."/>
            <person name="Apweiler R."/>
            <person name="Aturaliya R.N."/>
            <person name="Bailey T.L."/>
            <person name="Bansal M."/>
            <person name="Baxter L."/>
            <person name="Beisel K.W."/>
            <person name="Bersano T."/>
            <person name="Bono H."/>
            <person name="Chalk A.M."/>
            <person name="Chiu K.P."/>
            <person name="Choudhary V."/>
            <person name="Christoffels A."/>
            <person name="Clutterbuck D.R."/>
            <person name="Crowe M.L."/>
            <person name="Dalla E."/>
            <person name="Dalrymple B.P."/>
            <person name="de Bono B."/>
            <person name="Della Gatta G."/>
            <person name="di Bernardo D."/>
            <person name="Down T."/>
            <person name="Engstrom P."/>
            <person name="Fagiolini M."/>
            <person name="Faulkner G."/>
            <person name="Fletcher C.F."/>
            <person name="Fukushima T."/>
            <person name="Furuno M."/>
            <person name="Futaki S."/>
            <person name="Gariboldi M."/>
            <person name="Georgii-Hemming P."/>
            <person name="Gingeras T.R."/>
            <person name="Gojobori T."/>
            <person name="Green R.E."/>
            <person name="Gustincich S."/>
            <person name="Harbers M."/>
            <person name="Hayashi Y."/>
            <person name="Hensch T.K."/>
            <person name="Hirokawa N."/>
            <person name="Hill D."/>
            <person name="Huminiecki L."/>
            <person name="Iacono M."/>
            <person name="Ikeo K."/>
            <person name="Iwama A."/>
            <person name="Ishikawa T."/>
            <person name="Jakt M."/>
            <person name="Kanapin A."/>
            <person name="Katoh M."/>
            <person name="Kawasawa Y."/>
            <person name="Kelso J."/>
            <person name="Kitamura H."/>
            <person name="Kitano H."/>
            <person name="Kollias G."/>
            <person name="Krishnan S.P."/>
            <person name="Kruger A."/>
            <person name="Kummerfeld S.K."/>
            <person name="Kurochkin I.V."/>
            <person name="Lareau L.F."/>
            <person name="Lazarevic D."/>
            <person name="Lipovich L."/>
            <person name="Liu J."/>
            <person name="Liuni S."/>
            <person name="McWilliam S."/>
            <person name="Madan Babu M."/>
            <person name="Madera M."/>
            <person name="Marchionni L."/>
            <person name="Matsuda H."/>
            <person name="Matsuzawa S."/>
            <person name="Miki H."/>
            <person name="Mignone F."/>
            <person name="Miyake S."/>
            <person name="Morris K."/>
            <person name="Mottagui-Tabar S."/>
            <person name="Mulder N."/>
            <person name="Nakano N."/>
            <person name="Nakauchi H."/>
            <person name="Ng P."/>
            <person name="Nilsson R."/>
            <person name="Nishiguchi S."/>
            <person name="Nishikawa S."/>
            <person name="Nori F."/>
            <person name="Ohara O."/>
            <person name="Okazaki Y."/>
            <person name="Orlando V."/>
            <person name="Pang K.C."/>
            <person name="Pavan W.J."/>
            <person name="Pavesi G."/>
            <person name="Pesole G."/>
            <person name="Petrovsky N."/>
            <person name="Piazza S."/>
            <person name="Reed J."/>
            <person name="Reid J.F."/>
            <person name="Ring B.Z."/>
            <person name="Ringwald M."/>
            <person name="Rost B."/>
            <person name="Ruan Y."/>
            <person name="Salzberg S.L."/>
            <person name="Sandelin A."/>
            <person name="Schneider C."/>
            <person name="Schoenbach C."/>
            <person name="Sekiguchi K."/>
            <person name="Semple C.A."/>
            <person name="Seno S."/>
            <person name="Sessa L."/>
            <person name="Sheng Y."/>
            <person name="Shibata Y."/>
            <person name="Shimada H."/>
            <person name="Shimada K."/>
            <person name="Silva D."/>
            <person name="Sinclair B."/>
            <person name="Sperling S."/>
            <person name="Stupka E."/>
            <person name="Sugiura K."/>
            <person name="Sultana R."/>
            <person name="Takenaka Y."/>
            <person name="Taki K."/>
            <person name="Tammoja K."/>
            <person name="Tan S.L."/>
            <person name="Tang S."/>
            <person name="Taylor M.S."/>
            <person name="Tegner J."/>
            <person name="Teichmann S.A."/>
            <person name="Ueda H.R."/>
            <person name="van Nimwegen E."/>
            <person name="Verardo R."/>
            <person name="Wei C.L."/>
            <person name="Yagi K."/>
            <person name="Yamanishi H."/>
            <person name="Zabarovsky E."/>
            <person name="Zhu S."/>
            <person name="Zimmer A."/>
            <person name="Hide W."/>
            <person name="Bult C."/>
            <person name="Grimmond S.M."/>
            <person name="Teasdale R.D."/>
            <person name="Liu E.T."/>
            <person name="Brusic V."/>
            <person name="Quackenbush J."/>
            <person name="Wahlestedt C."/>
            <person name="Mattick J.S."/>
            <person name="Hume D.A."/>
            <person name="Kai C."/>
            <person name="Sasaki D."/>
            <person name="Tomaru Y."/>
            <person name="Fukuda S."/>
            <person name="Kanamori-Katayama M."/>
            <person name="Suzuki M."/>
            <person name="Aoki J."/>
            <person name="Arakawa T."/>
            <person name="Iida J."/>
            <person name="Imamura K."/>
            <person name="Itoh M."/>
            <person name="Kato T."/>
            <person name="Kawaji H."/>
            <person name="Kawagashira N."/>
            <person name="Kawashima T."/>
            <person name="Kojima M."/>
            <person name="Kondo S."/>
            <person name="Konno H."/>
            <person name="Nakano K."/>
            <person name="Ninomiya N."/>
            <person name="Nishio T."/>
            <person name="Okada M."/>
            <person name="Plessy C."/>
            <person name="Shibata K."/>
            <person name="Shiraki T."/>
            <person name="Suzuki S."/>
            <person name="Tagami M."/>
            <person name="Waki K."/>
            <person name="Watahiki A."/>
            <person name="Okamura-Oho Y."/>
            <person name="Suzuki H."/>
            <person name="Kawai J."/>
            <person name="Hayashizaki Y."/>
        </authorList>
    </citation>
    <scope>NUCLEOTIDE SEQUENCE [LARGE SCALE MRNA]</scope>
    <source>
        <strain>C57BL/6J</strain>
    </source>
</reference>
<reference key="3">
    <citation type="journal article" date="2009" name="PLoS Biol.">
        <title>Lineage-specific biology revealed by a finished genome assembly of the mouse.</title>
        <authorList>
            <person name="Church D.M."/>
            <person name="Goodstadt L."/>
            <person name="Hillier L.W."/>
            <person name="Zody M.C."/>
            <person name="Goldstein S."/>
            <person name="She X."/>
            <person name="Bult C.J."/>
            <person name="Agarwala R."/>
            <person name="Cherry J.L."/>
            <person name="DiCuccio M."/>
            <person name="Hlavina W."/>
            <person name="Kapustin Y."/>
            <person name="Meric P."/>
            <person name="Maglott D."/>
            <person name="Birtle Z."/>
            <person name="Marques A.C."/>
            <person name="Graves T."/>
            <person name="Zhou S."/>
            <person name="Teague B."/>
            <person name="Potamousis K."/>
            <person name="Churas C."/>
            <person name="Place M."/>
            <person name="Herschleb J."/>
            <person name="Runnheim R."/>
            <person name="Forrest D."/>
            <person name="Amos-Landgraf J."/>
            <person name="Schwartz D.C."/>
            <person name="Cheng Z."/>
            <person name="Lindblad-Toh K."/>
            <person name="Eichler E.E."/>
            <person name="Ponting C.P."/>
        </authorList>
    </citation>
    <scope>NUCLEOTIDE SEQUENCE [LARGE SCALE GENOMIC DNA]</scope>
    <source>
        <strain>C57BL/6J</strain>
    </source>
</reference>
<reference key="4">
    <citation type="journal article" date="2004" name="Genome Res.">
        <title>The status, quality, and expansion of the NIH full-length cDNA project: the Mammalian Gene Collection (MGC).</title>
        <authorList>
            <consortium name="The MGC Project Team"/>
        </authorList>
    </citation>
    <scope>NUCLEOTIDE SEQUENCE [LARGE SCALE MRNA]</scope>
    <source>
        <strain>C57BL/6J</strain>
        <tissue>Brain</tissue>
    </source>
</reference>
<reference key="5">
    <citation type="journal article" date="2003" name="Mol. Cell">
        <title>Removal of a single pore subcomplex results in vertebrate nuclei devoid of nuclear pores.</title>
        <authorList>
            <person name="Harel A."/>
            <person name="Orjalo A.V."/>
            <person name="Vincent T."/>
            <person name="Lachish-Zalait A."/>
            <person name="Vasu S."/>
            <person name="Shah S."/>
            <person name="Zimmerman E."/>
            <person name="Elbaum M."/>
            <person name="Forbes D.J."/>
        </authorList>
    </citation>
    <scope>INTERACTION WITH NUP160; NUP133 AND SEC13</scope>
</reference>
<reference key="6">
    <citation type="journal article" date="2010" name="Cell">
        <title>A tissue-specific atlas of mouse protein phosphorylation and expression.</title>
        <authorList>
            <person name="Huttlin E.L."/>
            <person name="Jedrychowski M.P."/>
            <person name="Elias J.E."/>
            <person name="Goswami T."/>
            <person name="Rad R."/>
            <person name="Beausoleil S.A."/>
            <person name="Villen J."/>
            <person name="Haas W."/>
            <person name="Sowa M.E."/>
            <person name="Gygi S.P."/>
        </authorList>
    </citation>
    <scope>IDENTIFICATION BY MASS SPECTROMETRY [LARGE SCALE ANALYSIS]</scope>
    <source>
        <tissue>Testis</tissue>
    </source>
</reference>
<reference key="7">
    <citation type="journal article" date="2013" name="Mol. Cell">
        <title>SIRT5-mediated lysine desuccinylation impacts diverse metabolic pathways.</title>
        <authorList>
            <person name="Park J."/>
            <person name="Chen Y."/>
            <person name="Tishkoff D.X."/>
            <person name="Peng C."/>
            <person name="Tan M."/>
            <person name="Dai L."/>
            <person name="Xie Z."/>
            <person name="Zhang Y."/>
            <person name="Zwaans B.M."/>
            <person name="Skinner M.E."/>
            <person name="Lombard D.B."/>
            <person name="Zhao Y."/>
        </authorList>
    </citation>
    <scope>ACETYLATION [LARGE SCALE ANALYSIS] AT LYS-92</scope>
    <scope>IDENTIFICATION BY MASS SPECTROMETRY [LARGE SCALE ANALYSIS]</scope>
    <source>
        <tissue>Embryonic fibroblast</tissue>
    </source>
</reference>
<sequence length="656" mass="74776">MEELDCEPAVTWIPGVNSKKKQMCFDWGPGEMLLCETSFNQTGKSEKVPSCPFIYIIRKDVDVYSQILRKLFNESHGIFVGLQKIEEELSGKSRKAQLVRVSKNYRSVIRACMEEMHQVAIAAKDPASGRQFSSQVSILSAMELIWNLCEILFIEVAPAGPLLLHLLDWVRLHVCEVDSLSADVLGGDNPSKHENFWDLVTVLVLQGRLDEARQMLAKEADANPSCAGMCRVLGDLMRTMPILSPGNTQTLTELELKWQHWREECERHLQDNTFAANPRLESLCKIMLGDEAALLEQKELLSNWYHFLVTRLLYSNPTVKPIDLHFYAQSSLDMFLGGESSPEPLDNILMAAFEFDIHQVIKECSIALSNWWFVAHLTDLLDHCRLLQSHNLYFGSNMREFLLLEYASGLFAHHSLWQLGVDYFDYCPELGRVSLELHIERIPLNTEQKALKVLRICEQRQMTEQVKSICKILAMKAVRNNRLGSALSWSIRAKDAAFATLVSDRFLRDYCERGCFSDLDLIDNLGSAMMLSDRLTFLGKYREFHRLYGEKRFGDAASLLLSLMTSQIAPRSFWMTLLTDALPLLEQKQVIFSAEQTYELMRCLEDLASGRPECGEPDAQRLQDDDIETTKVEMLRLALARNLARAIIREGSLEGS</sequence>
<keyword id="KW-0007">Acetylation</keyword>
<keyword id="KW-0137">Centromere</keyword>
<keyword id="KW-0158">Chromosome</keyword>
<keyword id="KW-0963">Cytoplasm</keyword>
<keyword id="KW-0206">Cytoskeleton</keyword>
<keyword id="KW-0995">Kinetochore</keyword>
<keyword id="KW-0472">Membrane</keyword>
<keyword id="KW-0509">mRNA transport</keyword>
<keyword id="KW-0906">Nuclear pore complex</keyword>
<keyword id="KW-0539">Nucleus</keyword>
<keyword id="KW-0653">Protein transport</keyword>
<keyword id="KW-1185">Reference proteome</keyword>
<keyword id="KW-0811">Translocation</keyword>
<keyword id="KW-0813">Transport</keyword>
<evidence type="ECO:0000250" key="1">
    <source>
        <dbReference type="UniProtKB" id="Q9BW27"/>
    </source>
</evidence>
<evidence type="ECO:0000269" key="2">
    <source>
    </source>
</evidence>
<evidence type="ECO:0000305" key="3"/>
<evidence type="ECO:0007744" key="4">
    <source>
    </source>
</evidence>
<gene>
    <name type="primary">Nup85</name>
    <name type="synonym">Pcnt1</name>
</gene>